<accession>Q46GW7</accession>
<comment type="function">
    <text evidence="1">Together with its co-chaperonin GroES, plays an essential role in assisting protein folding. The GroEL-GroES system forms a nano-cage that allows encapsulation of the non-native substrate proteins and provides a physical environment optimized to promote and accelerate protein folding.</text>
</comment>
<comment type="catalytic activity">
    <reaction evidence="1">
        <text>ATP + H2O + a folded polypeptide = ADP + phosphate + an unfolded polypeptide.</text>
        <dbReference type="EC" id="5.6.1.7"/>
    </reaction>
</comment>
<comment type="subunit">
    <text evidence="1">Forms a cylinder of 14 subunits composed of two heptameric rings stacked back-to-back. Interacts with the co-chaperonin GroES.</text>
</comment>
<comment type="subcellular location">
    <subcellularLocation>
        <location evidence="1">Cytoplasm</location>
    </subcellularLocation>
</comment>
<comment type="similarity">
    <text evidence="1">Belongs to the chaperonin (HSP60) family.</text>
</comment>
<keyword id="KW-0067">ATP-binding</keyword>
<keyword id="KW-0143">Chaperone</keyword>
<keyword id="KW-0963">Cytoplasm</keyword>
<keyword id="KW-0413">Isomerase</keyword>
<keyword id="KW-0547">Nucleotide-binding</keyword>
<keyword id="KW-1185">Reference proteome</keyword>
<organism>
    <name type="scientific">Prochlorococcus marinus (strain NATL2A)</name>
    <dbReference type="NCBI Taxonomy" id="59920"/>
    <lineage>
        <taxon>Bacteria</taxon>
        <taxon>Bacillati</taxon>
        <taxon>Cyanobacteriota</taxon>
        <taxon>Cyanophyceae</taxon>
        <taxon>Synechococcales</taxon>
        <taxon>Prochlorococcaceae</taxon>
        <taxon>Prochlorococcus</taxon>
    </lineage>
</organism>
<sequence length="560" mass="58822">MAKLLSFSDESRGALEKGVNNLANALKVTIGPKGRNVVIEKKFGAPDIVNDGVTIAKEIDLEDPFENIGAKLIEQVASKTKEKAGDGTTTATVLAQFMVQEGLRNTAAGASPIELRRGMEKAVAQIVDDLKKKSKSVSGDAIKQVATVSAGGDEEIGSMIADAIDKVSFDGVITVEESKSLATELDITEGMAFDRGYSSPYFVTDEDRLICEFENPSILITDKKISSIADLIPVLETVQKNGTPLIILAEEVEGEALATLVVNKNRGVLQVAAVRAPSFGERRKAALGDIAVLTGGTLISEDKAMSLEKVQISDLGQARRVTITKDSTTIVANEAQNTELSNRIASIKRELEETDSEYDQEKLNERIAKLAGGVAVIKVGAPTETELKNRKLRIEDALNATRAAIEEGIVAGGGTTLLELSEGLGDLAKKLEGDQKTGVEIIKRALTAPTKQIAINAGFNGDVVVSDIKRLGKGFNAQTGEYEDLLEAGILDASKVIRLALQDAVSIASLLITTEVVIADKPEPPSAPGAEGGDPMGGMGGMGGMGGMGGMGGMGMPGMM</sequence>
<evidence type="ECO:0000255" key="1">
    <source>
        <dbReference type="HAMAP-Rule" id="MF_00600"/>
    </source>
</evidence>
<evidence type="ECO:0000256" key="2">
    <source>
        <dbReference type="SAM" id="MobiDB-lite"/>
    </source>
</evidence>
<gene>
    <name evidence="1" type="primary">groEL2</name>
    <name evidence="1" type="synonym">groL2</name>
    <name type="ordered locus">PMN2A_1783</name>
</gene>
<name>CH602_PROMT</name>
<feature type="chain" id="PRO_0000256949" description="Chaperonin GroEL 2">
    <location>
        <begin position="1"/>
        <end position="560"/>
    </location>
</feature>
<feature type="region of interest" description="Disordered" evidence="2">
    <location>
        <begin position="520"/>
        <end position="542"/>
    </location>
</feature>
<feature type="compositionally biased region" description="Gly residues" evidence="2">
    <location>
        <begin position="530"/>
        <end position="542"/>
    </location>
</feature>
<feature type="binding site" evidence="1">
    <location>
        <begin position="29"/>
        <end position="32"/>
    </location>
    <ligand>
        <name>ATP</name>
        <dbReference type="ChEBI" id="CHEBI:30616"/>
    </ligand>
</feature>
<feature type="binding site" evidence="1">
    <location>
        <begin position="86"/>
        <end position="90"/>
    </location>
    <ligand>
        <name>ATP</name>
        <dbReference type="ChEBI" id="CHEBI:30616"/>
    </ligand>
</feature>
<feature type="binding site" evidence="1">
    <location>
        <position position="413"/>
    </location>
    <ligand>
        <name>ATP</name>
        <dbReference type="ChEBI" id="CHEBI:30616"/>
    </ligand>
</feature>
<feature type="binding site" evidence="1">
    <location>
        <position position="492"/>
    </location>
    <ligand>
        <name>ATP</name>
        <dbReference type="ChEBI" id="CHEBI:30616"/>
    </ligand>
</feature>
<reference key="1">
    <citation type="journal article" date="2007" name="PLoS Genet.">
        <title>Patterns and implications of gene gain and loss in the evolution of Prochlorococcus.</title>
        <authorList>
            <person name="Kettler G.C."/>
            <person name="Martiny A.C."/>
            <person name="Huang K."/>
            <person name="Zucker J."/>
            <person name="Coleman M.L."/>
            <person name="Rodrigue S."/>
            <person name="Chen F."/>
            <person name="Lapidus A."/>
            <person name="Ferriera S."/>
            <person name="Johnson J."/>
            <person name="Steglich C."/>
            <person name="Church G.M."/>
            <person name="Richardson P."/>
            <person name="Chisholm S.W."/>
        </authorList>
    </citation>
    <scope>NUCLEOTIDE SEQUENCE [LARGE SCALE GENOMIC DNA]</scope>
    <source>
        <strain>NATL2A</strain>
    </source>
</reference>
<dbReference type="EC" id="5.6.1.7" evidence="1"/>
<dbReference type="EMBL" id="CP000095">
    <property type="protein sequence ID" value="AAZ59271.1"/>
    <property type="molecule type" value="Genomic_DNA"/>
</dbReference>
<dbReference type="RefSeq" id="WP_011294416.1">
    <property type="nucleotide sequence ID" value="NC_007335.2"/>
</dbReference>
<dbReference type="SMR" id="Q46GW7"/>
<dbReference type="STRING" id="59920.PMN2A_1783"/>
<dbReference type="KEGG" id="pmn:PMN2A_1783"/>
<dbReference type="HOGENOM" id="CLU_016503_3_0_3"/>
<dbReference type="OrthoDB" id="9766614at2"/>
<dbReference type="PhylomeDB" id="Q46GW7"/>
<dbReference type="Proteomes" id="UP000002535">
    <property type="component" value="Chromosome"/>
</dbReference>
<dbReference type="GO" id="GO:0005737">
    <property type="term" value="C:cytoplasm"/>
    <property type="evidence" value="ECO:0007669"/>
    <property type="project" value="UniProtKB-SubCell"/>
</dbReference>
<dbReference type="GO" id="GO:0005524">
    <property type="term" value="F:ATP binding"/>
    <property type="evidence" value="ECO:0007669"/>
    <property type="project" value="UniProtKB-UniRule"/>
</dbReference>
<dbReference type="GO" id="GO:0140662">
    <property type="term" value="F:ATP-dependent protein folding chaperone"/>
    <property type="evidence" value="ECO:0007669"/>
    <property type="project" value="InterPro"/>
</dbReference>
<dbReference type="GO" id="GO:0016853">
    <property type="term" value="F:isomerase activity"/>
    <property type="evidence" value="ECO:0007669"/>
    <property type="project" value="UniProtKB-KW"/>
</dbReference>
<dbReference type="GO" id="GO:0051082">
    <property type="term" value="F:unfolded protein binding"/>
    <property type="evidence" value="ECO:0007669"/>
    <property type="project" value="UniProtKB-UniRule"/>
</dbReference>
<dbReference type="GO" id="GO:0042026">
    <property type="term" value="P:protein refolding"/>
    <property type="evidence" value="ECO:0007669"/>
    <property type="project" value="UniProtKB-UniRule"/>
</dbReference>
<dbReference type="CDD" id="cd03344">
    <property type="entry name" value="GroEL"/>
    <property type="match status" value="1"/>
</dbReference>
<dbReference type="FunFam" id="3.50.7.10:FF:000001">
    <property type="entry name" value="60 kDa chaperonin"/>
    <property type="match status" value="1"/>
</dbReference>
<dbReference type="Gene3D" id="3.50.7.10">
    <property type="entry name" value="GroEL"/>
    <property type="match status" value="1"/>
</dbReference>
<dbReference type="Gene3D" id="1.10.560.10">
    <property type="entry name" value="GroEL-like equatorial domain"/>
    <property type="match status" value="1"/>
</dbReference>
<dbReference type="Gene3D" id="3.30.260.10">
    <property type="entry name" value="TCP-1-like chaperonin intermediate domain"/>
    <property type="match status" value="1"/>
</dbReference>
<dbReference type="HAMAP" id="MF_00600">
    <property type="entry name" value="CH60"/>
    <property type="match status" value="1"/>
</dbReference>
<dbReference type="InterPro" id="IPR018370">
    <property type="entry name" value="Chaperonin_Cpn60_CS"/>
</dbReference>
<dbReference type="InterPro" id="IPR001844">
    <property type="entry name" value="Cpn60/GroEL"/>
</dbReference>
<dbReference type="InterPro" id="IPR002423">
    <property type="entry name" value="Cpn60/GroEL/TCP-1"/>
</dbReference>
<dbReference type="InterPro" id="IPR027409">
    <property type="entry name" value="GroEL-like_apical_dom_sf"/>
</dbReference>
<dbReference type="InterPro" id="IPR027413">
    <property type="entry name" value="GROEL-like_equatorial_sf"/>
</dbReference>
<dbReference type="InterPro" id="IPR027410">
    <property type="entry name" value="TCP-1-like_intermed_sf"/>
</dbReference>
<dbReference type="NCBIfam" id="TIGR02348">
    <property type="entry name" value="GroEL"/>
    <property type="match status" value="1"/>
</dbReference>
<dbReference type="NCBIfam" id="NF000592">
    <property type="entry name" value="PRK00013.1"/>
    <property type="match status" value="1"/>
</dbReference>
<dbReference type="NCBIfam" id="NF009487">
    <property type="entry name" value="PRK12849.1"/>
    <property type="match status" value="1"/>
</dbReference>
<dbReference type="NCBIfam" id="NF009488">
    <property type="entry name" value="PRK12850.1"/>
    <property type="match status" value="1"/>
</dbReference>
<dbReference type="NCBIfam" id="NF009489">
    <property type="entry name" value="PRK12851.1"/>
    <property type="match status" value="1"/>
</dbReference>
<dbReference type="PANTHER" id="PTHR45633">
    <property type="entry name" value="60 KDA HEAT SHOCK PROTEIN, MITOCHONDRIAL"/>
    <property type="match status" value="1"/>
</dbReference>
<dbReference type="Pfam" id="PF00118">
    <property type="entry name" value="Cpn60_TCP1"/>
    <property type="match status" value="1"/>
</dbReference>
<dbReference type="PRINTS" id="PR00298">
    <property type="entry name" value="CHAPERONIN60"/>
</dbReference>
<dbReference type="SUPFAM" id="SSF52029">
    <property type="entry name" value="GroEL apical domain-like"/>
    <property type="match status" value="1"/>
</dbReference>
<dbReference type="SUPFAM" id="SSF48592">
    <property type="entry name" value="GroEL equatorial domain-like"/>
    <property type="match status" value="1"/>
</dbReference>
<dbReference type="SUPFAM" id="SSF54849">
    <property type="entry name" value="GroEL-intermediate domain like"/>
    <property type="match status" value="1"/>
</dbReference>
<dbReference type="PROSITE" id="PS00296">
    <property type="entry name" value="CHAPERONINS_CPN60"/>
    <property type="match status" value="1"/>
</dbReference>
<protein>
    <recommendedName>
        <fullName evidence="1">Chaperonin GroEL 2</fullName>
        <ecNumber evidence="1">5.6.1.7</ecNumber>
    </recommendedName>
    <alternativeName>
        <fullName evidence="1">60 kDa chaperonin 2</fullName>
    </alternativeName>
    <alternativeName>
        <fullName evidence="1">Chaperonin-60 2</fullName>
        <shortName evidence="1">Cpn60 2</shortName>
    </alternativeName>
</protein>
<proteinExistence type="inferred from homology"/>